<organism>
    <name type="scientific">Aspergillus fumigatus (strain ATCC MYA-4609 / CBS 101355 / FGSC A1100 / Af293)</name>
    <name type="common">Neosartorya fumigata</name>
    <dbReference type="NCBI Taxonomy" id="330879"/>
    <lineage>
        <taxon>Eukaryota</taxon>
        <taxon>Fungi</taxon>
        <taxon>Dikarya</taxon>
        <taxon>Ascomycota</taxon>
        <taxon>Pezizomycotina</taxon>
        <taxon>Eurotiomycetes</taxon>
        <taxon>Eurotiomycetidae</taxon>
        <taxon>Eurotiales</taxon>
        <taxon>Aspergillaceae</taxon>
        <taxon>Aspergillus</taxon>
        <taxon>Aspergillus subgen. Fumigati</taxon>
    </lineage>
</organism>
<gene>
    <name type="primary">plyE</name>
    <name type="ORF">AFUA_8G05910</name>
</gene>
<evidence type="ECO:0000250" key="1"/>
<evidence type="ECO:0000255" key="2"/>
<evidence type="ECO:0000256" key="3">
    <source>
        <dbReference type="SAM" id="MobiDB-lite"/>
    </source>
</evidence>
<evidence type="ECO:0000305" key="4"/>
<feature type="signal peptide" evidence="2">
    <location>
        <begin position="1"/>
        <end position="17"/>
    </location>
</feature>
<feature type="chain" id="PRO_0000394583" description="Probable pectate lyase E">
    <location>
        <begin position="18"/>
        <end position="254"/>
    </location>
</feature>
<feature type="region of interest" description="Disordered" evidence="3">
    <location>
        <begin position="228"/>
        <end position="254"/>
    </location>
</feature>
<feature type="glycosylation site" description="N-linked (GlcNAc...) asparagine" evidence="2">
    <location>
        <position position="175"/>
    </location>
</feature>
<name>PLYE_ASPFU</name>
<proteinExistence type="inferred from homology"/>
<sequence length="254" mass="26828">MYQPLLLLPLLLTSAFATPHDPTTHQALEKRASFPIPSSKGSVTYSSPKTISGTFDGGLKTYGRGVKCTGQKEGGEKDAVFVLEDGATLKNAIIGADQIEGVYCKGSCTIQNVWWTDVCEDALSLKGTGSGTHRIIGGGARNADDKVIQHNSGGKVIIQDFTVQNFGKLYRACGNCSKQFKRTVEISGVKASSGKALVGINSNYGDTATISGCASSVKEICVEYEGTDNNKKEPAKKSSGPSNACKYKEPLASC</sequence>
<protein>
    <recommendedName>
        <fullName>Probable pectate lyase E</fullName>
        <ecNumber>4.2.2.2</ecNumber>
    </recommendedName>
</protein>
<accession>Q4WC29</accession>
<comment type="function">
    <text evidence="1">Pectinolytic enzyme consist of four classes of enzymes: pectin lyase, polygalacturonase, pectin methylesterase and rhamnogalacturonase. Among pectinolytic enzymes, pectin lyase is the most important in depolymerization of pectin, since it cleaves internal glycosidic bonds of highly methylated pectins. Favors pectate, the anion, over pectin, the methyl ester (By similarity).</text>
</comment>
<comment type="catalytic activity">
    <reaction>
        <text>Eliminative cleavage of (1-&gt;4)-alpha-D-galacturonan to give oligosaccharides with 4-deoxy-alpha-D-galact-4-enuronosyl groups at their non-reducing ends.</text>
        <dbReference type="EC" id="4.2.2.2"/>
    </reaction>
</comment>
<comment type="cofactor">
    <cofactor evidence="1">
        <name>Ca(2+)</name>
        <dbReference type="ChEBI" id="CHEBI:29108"/>
    </cofactor>
    <text evidence="1">Binds 1 Ca(2+) ion per subunit.</text>
</comment>
<comment type="subcellular location">
    <subcellularLocation>
        <location evidence="1">Secreted</location>
    </subcellularLocation>
</comment>
<comment type="similarity">
    <text evidence="4">Belongs to the polysaccharide lyase 3 family.</text>
</comment>
<keyword id="KW-0106">Calcium</keyword>
<keyword id="KW-0119">Carbohydrate metabolism</keyword>
<keyword id="KW-0961">Cell wall biogenesis/degradation</keyword>
<keyword id="KW-0325">Glycoprotein</keyword>
<keyword id="KW-0456">Lyase</keyword>
<keyword id="KW-0624">Polysaccharide degradation</keyword>
<keyword id="KW-1185">Reference proteome</keyword>
<keyword id="KW-0964">Secreted</keyword>
<keyword id="KW-0732">Signal</keyword>
<dbReference type="EC" id="4.2.2.2"/>
<dbReference type="EMBL" id="AAHF01000013">
    <property type="protein sequence ID" value="EAL85355.1"/>
    <property type="molecule type" value="Genomic_DNA"/>
</dbReference>
<dbReference type="RefSeq" id="XP_747393.1">
    <property type="nucleotide sequence ID" value="XM_742300.1"/>
</dbReference>
<dbReference type="SMR" id="Q4WC29"/>
<dbReference type="STRING" id="330879.Q4WC29"/>
<dbReference type="GlyCosmos" id="Q4WC29">
    <property type="glycosylation" value="1 site, No reported glycans"/>
</dbReference>
<dbReference type="EnsemblFungi" id="EAL85355">
    <property type="protein sequence ID" value="EAL85355"/>
    <property type="gene ID" value="AFUA_8G05910"/>
</dbReference>
<dbReference type="GeneID" id="3504909"/>
<dbReference type="KEGG" id="afm:AFUA_8G05910"/>
<dbReference type="VEuPathDB" id="FungiDB:Afu8g05910"/>
<dbReference type="eggNOG" id="ENOG502QU39">
    <property type="taxonomic scope" value="Eukaryota"/>
</dbReference>
<dbReference type="HOGENOM" id="CLU_044863_3_1_1"/>
<dbReference type="InParanoid" id="Q4WC29"/>
<dbReference type="OMA" id="KCTGQVE"/>
<dbReference type="OrthoDB" id="441042at2759"/>
<dbReference type="Proteomes" id="UP000002530">
    <property type="component" value="Chromosome 8"/>
</dbReference>
<dbReference type="GO" id="GO:0005576">
    <property type="term" value="C:extracellular region"/>
    <property type="evidence" value="ECO:0007669"/>
    <property type="project" value="UniProtKB-SubCell"/>
</dbReference>
<dbReference type="GO" id="GO:0030570">
    <property type="term" value="F:pectate lyase activity"/>
    <property type="evidence" value="ECO:0007669"/>
    <property type="project" value="UniProtKB-EC"/>
</dbReference>
<dbReference type="GO" id="GO:0071555">
    <property type="term" value="P:cell wall organization"/>
    <property type="evidence" value="ECO:0007669"/>
    <property type="project" value="UniProtKB-KW"/>
</dbReference>
<dbReference type="GO" id="GO:0045490">
    <property type="term" value="P:pectin catabolic process"/>
    <property type="evidence" value="ECO:0000318"/>
    <property type="project" value="GO_Central"/>
</dbReference>
<dbReference type="FunFam" id="2.160.20.10:FF:000044">
    <property type="entry name" value="Pectate lyase E"/>
    <property type="match status" value="1"/>
</dbReference>
<dbReference type="Gene3D" id="2.160.20.10">
    <property type="entry name" value="Single-stranded right-handed beta-helix, Pectin lyase-like"/>
    <property type="match status" value="1"/>
</dbReference>
<dbReference type="InterPro" id="IPR004898">
    <property type="entry name" value="Pectate_lyase_PlyH/PlyE-like"/>
</dbReference>
<dbReference type="InterPro" id="IPR012334">
    <property type="entry name" value="Pectin_lyas_fold"/>
</dbReference>
<dbReference type="InterPro" id="IPR011050">
    <property type="entry name" value="Pectin_lyase_fold/virulence"/>
</dbReference>
<dbReference type="PANTHER" id="PTHR33407:SF8">
    <property type="entry name" value="PECTATE LYASE E"/>
    <property type="match status" value="1"/>
</dbReference>
<dbReference type="PANTHER" id="PTHR33407">
    <property type="entry name" value="PECTATE LYASE F-RELATED"/>
    <property type="match status" value="1"/>
</dbReference>
<dbReference type="Pfam" id="PF03211">
    <property type="entry name" value="Pectate_lyase"/>
    <property type="match status" value="1"/>
</dbReference>
<dbReference type="SUPFAM" id="SSF51126">
    <property type="entry name" value="Pectin lyase-like"/>
    <property type="match status" value="1"/>
</dbReference>
<reference key="1">
    <citation type="journal article" date="2005" name="Nature">
        <title>Genomic sequence of the pathogenic and allergenic filamentous fungus Aspergillus fumigatus.</title>
        <authorList>
            <person name="Nierman W.C."/>
            <person name="Pain A."/>
            <person name="Anderson M.J."/>
            <person name="Wortman J.R."/>
            <person name="Kim H.S."/>
            <person name="Arroyo J."/>
            <person name="Berriman M."/>
            <person name="Abe K."/>
            <person name="Archer D.B."/>
            <person name="Bermejo C."/>
            <person name="Bennett J.W."/>
            <person name="Bowyer P."/>
            <person name="Chen D."/>
            <person name="Collins M."/>
            <person name="Coulsen R."/>
            <person name="Davies R."/>
            <person name="Dyer P.S."/>
            <person name="Farman M.L."/>
            <person name="Fedorova N."/>
            <person name="Fedorova N.D."/>
            <person name="Feldblyum T.V."/>
            <person name="Fischer R."/>
            <person name="Fosker N."/>
            <person name="Fraser A."/>
            <person name="Garcia J.L."/>
            <person name="Garcia M.J."/>
            <person name="Goble A."/>
            <person name="Goldman G.H."/>
            <person name="Gomi K."/>
            <person name="Griffith-Jones S."/>
            <person name="Gwilliam R."/>
            <person name="Haas B.J."/>
            <person name="Haas H."/>
            <person name="Harris D.E."/>
            <person name="Horiuchi H."/>
            <person name="Huang J."/>
            <person name="Humphray S."/>
            <person name="Jimenez J."/>
            <person name="Keller N."/>
            <person name="Khouri H."/>
            <person name="Kitamoto K."/>
            <person name="Kobayashi T."/>
            <person name="Konzack S."/>
            <person name="Kulkarni R."/>
            <person name="Kumagai T."/>
            <person name="Lafton A."/>
            <person name="Latge J.-P."/>
            <person name="Li W."/>
            <person name="Lord A."/>
            <person name="Lu C."/>
            <person name="Majoros W.H."/>
            <person name="May G.S."/>
            <person name="Miller B.L."/>
            <person name="Mohamoud Y."/>
            <person name="Molina M."/>
            <person name="Monod M."/>
            <person name="Mouyna I."/>
            <person name="Mulligan S."/>
            <person name="Murphy L.D."/>
            <person name="O'Neil S."/>
            <person name="Paulsen I."/>
            <person name="Penalva M.A."/>
            <person name="Pertea M."/>
            <person name="Price C."/>
            <person name="Pritchard B.L."/>
            <person name="Quail M.A."/>
            <person name="Rabbinowitsch E."/>
            <person name="Rawlins N."/>
            <person name="Rajandream M.A."/>
            <person name="Reichard U."/>
            <person name="Renauld H."/>
            <person name="Robson G.D."/>
            <person name="Rodriguez de Cordoba S."/>
            <person name="Rodriguez-Pena J.M."/>
            <person name="Ronning C.M."/>
            <person name="Rutter S."/>
            <person name="Salzberg S.L."/>
            <person name="Sanchez M."/>
            <person name="Sanchez-Ferrero J.C."/>
            <person name="Saunders D."/>
            <person name="Seeger K."/>
            <person name="Squares R."/>
            <person name="Squares S."/>
            <person name="Takeuchi M."/>
            <person name="Tekaia F."/>
            <person name="Turner G."/>
            <person name="Vazquez de Aldana C.R."/>
            <person name="Weidman J."/>
            <person name="White O."/>
            <person name="Woodward J.R."/>
            <person name="Yu J.-H."/>
            <person name="Fraser C.M."/>
            <person name="Galagan J.E."/>
            <person name="Asai K."/>
            <person name="Machida M."/>
            <person name="Hall N."/>
            <person name="Barrell B.G."/>
            <person name="Denning D.W."/>
        </authorList>
    </citation>
    <scope>NUCLEOTIDE SEQUENCE [LARGE SCALE GENOMIC DNA]</scope>
    <source>
        <strain>ATCC MYA-4609 / CBS 101355 / FGSC A1100 / Af293</strain>
    </source>
</reference>